<sequence length="270" mass="30020">MENPVIIYVISDAIGETAQHIIRAVTAQFSLNKPADIRRHAFIRDESALLETLEEAKATDGIVVQTLVQAKLAEYATNFCVQNNIPNVDLLHTLTAAVEAKTGLKSKQDPGNMRRLDSNYFDRIAAIEFAVKYDDCKDPRGLLDADIVLVGVSRTSKTPLSSFLANQNWKVANVPLVPEIPIPAELFQIPAERIIGLTTTPEKLAQIRKVRLRSIGLDEASSYSSEKRILEELEYGYDTFKKLGCQVIHVEDKAIEETAALITEIITSYH</sequence>
<accession>Q8Y634</accession>
<gene>
    <name type="ordered locus">lmo1866</name>
</gene>
<proteinExistence type="inferred from homology"/>
<protein>
    <recommendedName>
        <fullName evidence="1">Putative pyruvate, phosphate dikinase regulatory protein 2</fullName>
        <shortName evidence="1">PPDK regulatory protein 2</shortName>
        <ecNumber evidence="1">2.7.11.32</ecNumber>
        <ecNumber evidence="1">2.7.4.27</ecNumber>
    </recommendedName>
</protein>
<name>PDRP2_LISMO</name>
<organism>
    <name type="scientific">Listeria monocytogenes serovar 1/2a (strain ATCC BAA-679 / EGD-e)</name>
    <dbReference type="NCBI Taxonomy" id="169963"/>
    <lineage>
        <taxon>Bacteria</taxon>
        <taxon>Bacillati</taxon>
        <taxon>Bacillota</taxon>
        <taxon>Bacilli</taxon>
        <taxon>Bacillales</taxon>
        <taxon>Listeriaceae</taxon>
        <taxon>Listeria</taxon>
    </lineage>
</organism>
<dbReference type="EC" id="2.7.11.32" evidence="1"/>
<dbReference type="EC" id="2.7.4.27" evidence="1"/>
<dbReference type="EMBL" id="AL591981">
    <property type="protein sequence ID" value="CAC99944.1"/>
    <property type="molecule type" value="Genomic_DNA"/>
</dbReference>
<dbReference type="PIR" id="AB1308">
    <property type="entry name" value="AB1308"/>
</dbReference>
<dbReference type="RefSeq" id="NP_465391.1">
    <property type="nucleotide sequence ID" value="NC_003210.1"/>
</dbReference>
<dbReference type="RefSeq" id="WP_009933160.1">
    <property type="nucleotide sequence ID" value="NZ_CP149495.1"/>
</dbReference>
<dbReference type="SMR" id="Q8Y634"/>
<dbReference type="STRING" id="169963.gene:17594551"/>
<dbReference type="PaxDb" id="169963-lmo1866"/>
<dbReference type="EnsemblBacteria" id="CAC99944">
    <property type="protein sequence ID" value="CAC99944"/>
    <property type="gene ID" value="CAC99944"/>
</dbReference>
<dbReference type="GeneID" id="985829"/>
<dbReference type="KEGG" id="lmo:lmo1866"/>
<dbReference type="PATRIC" id="fig|169963.11.peg.1911"/>
<dbReference type="eggNOG" id="COG1806">
    <property type="taxonomic scope" value="Bacteria"/>
</dbReference>
<dbReference type="HOGENOM" id="CLU_046206_2_1_9"/>
<dbReference type="OrthoDB" id="9782201at2"/>
<dbReference type="PhylomeDB" id="Q8Y634"/>
<dbReference type="BioCyc" id="LMON169963:LMO1866-MONOMER"/>
<dbReference type="Proteomes" id="UP000000817">
    <property type="component" value="Chromosome"/>
</dbReference>
<dbReference type="GO" id="GO:0043531">
    <property type="term" value="F:ADP binding"/>
    <property type="evidence" value="ECO:0007669"/>
    <property type="project" value="UniProtKB-UniRule"/>
</dbReference>
<dbReference type="GO" id="GO:0005524">
    <property type="term" value="F:ATP binding"/>
    <property type="evidence" value="ECO:0007669"/>
    <property type="project" value="InterPro"/>
</dbReference>
<dbReference type="GO" id="GO:0016776">
    <property type="term" value="F:phosphotransferase activity, phosphate group as acceptor"/>
    <property type="evidence" value="ECO:0007669"/>
    <property type="project" value="UniProtKB-UniRule"/>
</dbReference>
<dbReference type="GO" id="GO:0004674">
    <property type="term" value="F:protein serine/threonine kinase activity"/>
    <property type="evidence" value="ECO:0007669"/>
    <property type="project" value="UniProtKB-UniRule"/>
</dbReference>
<dbReference type="HAMAP" id="MF_00921">
    <property type="entry name" value="PDRP"/>
    <property type="match status" value="1"/>
</dbReference>
<dbReference type="InterPro" id="IPR005177">
    <property type="entry name" value="Kinase-pyrophosphorylase"/>
</dbReference>
<dbReference type="InterPro" id="IPR026565">
    <property type="entry name" value="PPDK_reg"/>
</dbReference>
<dbReference type="NCBIfam" id="NF003742">
    <property type="entry name" value="PRK05339.1"/>
    <property type="match status" value="1"/>
</dbReference>
<dbReference type="PANTHER" id="PTHR31756">
    <property type="entry name" value="PYRUVATE, PHOSPHATE DIKINASE REGULATORY PROTEIN 1, CHLOROPLASTIC"/>
    <property type="match status" value="1"/>
</dbReference>
<dbReference type="PANTHER" id="PTHR31756:SF3">
    <property type="entry name" value="PYRUVATE, PHOSPHATE DIKINASE REGULATORY PROTEIN 1, CHLOROPLASTIC"/>
    <property type="match status" value="1"/>
</dbReference>
<dbReference type="Pfam" id="PF03618">
    <property type="entry name" value="Kinase-PPPase"/>
    <property type="match status" value="1"/>
</dbReference>
<comment type="function">
    <text evidence="1">Bifunctional serine/threonine kinase and phosphorylase involved in the regulation of the pyruvate, phosphate dikinase (PPDK) by catalyzing its phosphorylation/dephosphorylation.</text>
</comment>
<comment type="catalytic activity">
    <reaction evidence="1">
        <text>N(tele)-phospho-L-histidyl/L-threonyl-[pyruvate, phosphate dikinase] + ADP = N(tele)-phospho-L-histidyl/O-phospho-L-threonyl-[pyruvate, phosphate dikinase] + AMP + H(+)</text>
        <dbReference type="Rhea" id="RHEA:43692"/>
        <dbReference type="Rhea" id="RHEA-COMP:10650"/>
        <dbReference type="Rhea" id="RHEA-COMP:10651"/>
        <dbReference type="ChEBI" id="CHEBI:15378"/>
        <dbReference type="ChEBI" id="CHEBI:30013"/>
        <dbReference type="ChEBI" id="CHEBI:61977"/>
        <dbReference type="ChEBI" id="CHEBI:83586"/>
        <dbReference type="ChEBI" id="CHEBI:456215"/>
        <dbReference type="ChEBI" id="CHEBI:456216"/>
        <dbReference type="EC" id="2.7.11.32"/>
    </reaction>
</comment>
<comment type="catalytic activity">
    <reaction evidence="1">
        <text>N(tele)-phospho-L-histidyl/O-phospho-L-threonyl-[pyruvate, phosphate dikinase] + phosphate + H(+) = N(tele)-phospho-L-histidyl/L-threonyl-[pyruvate, phosphate dikinase] + diphosphate</text>
        <dbReference type="Rhea" id="RHEA:43696"/>
        <dbReference type="Rhea" id="RHEA-COMP:10650"/>
        <dbReference type="Rhea" id="RHEA-COMP:10651"/>
        <dbReference type="ChEBI" id="CHEBI:15378"/>
        <dbReference type="ChEBI" id="CHEBI:30013"/>
        <dbReference type="ChEBI" id="CHEBI:33019"/>
        <dbReference type="ChEBI" id="CHEBI:43474"/>
        <dbReference type="ChEBI" id="CHEBI:61977"/>
        <dbReference type="ChEBI" id="CHEBI:83586"/>
        <dbReference type="EC" id="2.7.4.27"/>
    </reaction>
</comment>
<comment type="similarity">
    <text evidence="1">Belongs to the pyruvate, phosphate/water dikinase regulatory protein family. PDRP subfamily.</text>
</comment>
<feature type="chain" id="PRO_0000196673" description="Putative pyruvate, phosphate dikinase regulatory protein 2">
    <location>
        <begin position="1"/>
        <end position="270"/>
    </location>
</feature>
<feature type="binding site" evidence="1">
    <location>
        <begin position="151"/>
        <end position="158"/>
    </location>
    <ligand>
        <name>ADP</name>
        <dbReference type="ChEBI" id="CHEBI:456216"/>
    </ligand>
</feature>
<keyword id="KW-0418">Kinase</keyword>
<keyword id="KW-0547">Nucleotide-binding</keyword>
<keyword id="KW-1185">Reference proteome</keyword>
<keyword id="KW-0723">Serine/threonine-protein kinase</keyword>
<keyword id="KW-0808">Transferase</keyword>
<evidence type="ECO:0000255" key="1">
    <source>
        <dbReference type="HAMAP-Rule" id="MF_00921"/>
    </source>
</evidence>
<reference key="1">
    <citation type="journal article" date="2001" name="Science">
        <title>Comparative genomics of Listeria species.</title>
        <authorList>
            <person name="Glaser P."/>
            <person name="Frangeul L."/>
            <person name="Buchrieser C."/>
            <person name="Rusniok C."/>
            <person name="Amend A."/>
            <person name="Baquero F."/>
            <person name="Berche P."/>
            <person name="Bloecker H."/>
            <person name="Brandt P."/>
            <person name="Chakraborty T."/>
            <person name="Charbit A."/>
            <person name="Chetouani F."/>
            <person name="Couve E."/>
            <person name="de Daruvar A."/>
            <person name="Dehoux P."/>
            <person name="Domann E."/>
            <person name="Dominguez-Bernal G."/>
            <person name="Duchaud E."/>
            <person name="Durant L."/>
            <person name="Dussurget O."/>
            <person name="Entian K.-D."/>
            <person name="Fsihi H."/>
            <person name="Garcia-del Portillo F."/>
            <person name="Garrido P."/>
            <person name="Gautier L."/>
            <person name="Goebel W."/>
            <person name="Gomez-Lopez N."/>
            <person name="Hain T."/>
            <person name="Hauf J."/>
            <person name="Jackson D."/>
            <person name="Jones L.-M."/>
            <person name="Kaerst U."/>
            <person name="Kreft J."/>
            <person name="Kuhn M."/>
            <person name="Kunst F."/>
            <person name="Kurapkat G."/>
            <person name="Madueno E."/>
            <person name="Maitournam A."/>
            <person name="Mata Vicente J."/>
            <person name="Ng E."/>
            <person name="Nedjari H."/>
            <person name="Nordsiek G."/>
            <person name="Novella S."/>
            <person name="de Pablos B."/>
            <person name="Perez-Diaz J.-C."/>
            <person name="Purcell R."/>
            <person name="Remmel B."/>
            <person name="Rose M."/>
            <person name="Schlueter T."/>
            <person name="Simoes N."/>
            <person name="Tierrez A."/>
            <person name="Vazquez-Boland J.-A."/>
            <person name="Voss H."/>
            <person name="Wehland J."/>
            <person name="Cossart P."/>
        </authorList>
    </citation>
    <scope>NUCLEOTIDE SEQUENCE [LARGE SCALE GENOMIC DNA]</scope>
    <source>
        <strain>ATCC BAA-679 / EGD-e</strain>
    </source>
</reference>